<evidence type="ECO:0000255" key="1">
    <source>
        <dbReference type="HAMAP-Rule" id="MF_02006"/>
    </source>
</evidence>
<gene>
    <name evidence="1" type="primary">tyrS</name>
    <name type="ordered locus">Atu1828</name>
    <name type="ORF">AGR_C_3358</name>
</gene>
<comment type="function">
    <text evidence="1">Catalyzes the attachment of tyrosine to tRNA(Tyr) in a two-step reaction: tyrosine is first activated by ATP to form Tyr-AMP and then transferred to the acceptor end of tRNA(Tyr).</text>
</comment>
<comment type="catalytic activity">
    <reaction evidence="1">
        <text>tRNA(Tyr) + L-tyrosine + ATP = L-tyrosyl-tRNA(Tyr) + AMP + diphosphate + H(+)</text>
        <dbReference type="Rhea" id="RHEA:10220"/>
        <dbReference type="Rhea" id="RHEA-COMP:9706"/>
        <dbReference type="Rhea" id="RHEA-COMP:9707"/>
        <dbReference type="ChEBI" id="CHEBI:15378"/>
        <dbReference type="ChEBI" id="CHEBI:30616"/>
        <dbReference type="ChEBI" id="CHEBI:33019"/>
        <dbReference type="ChEBI" id="CHEBI:58315"/>
        <dbReference type="ChEBI" id="CHEBI:78442"/>
        <dbReference type="ChEBI" id="CHEBI:78536"/>
        <dbReference type="ChEBI" id="CHEBI:456215"/>
        <dbReference type="EC" id="6.1.1.1"/>
    </reaction>
</comment>
<comment type="subunit">
    <text evidence="1">Homodimer.</text>
</comment>
<comment type="subcellular location">
    <subcellularLocation>
        <location evidence="1">Cytoplasm</location>
    </subcellularLocation>
</comment>
<comment type="similarity">
    <text evidence="1">Belongs to the class-I aminoacyl-tRNA synthetase family. TyrS type 1 subfamily.</text>
</comment>
<organism>
    <name type="scientific">Agrobacterium fabrum (strain C58 / ATCC 33970)</name>
    <name type="common">Agrobacterium tumefaciens (strain C58)</name>
    <dbReference type="NCBI Taxonomy" id="176299"/>
    <lineage>
        <taxon>Bacteria</taxon>
        <taxon>Pseudomonadati</taxon>
        <taxon>Pseudomonadota</taxon>
        <taxon>Alphaproteobacteria</taxon>
        <taxon>Hyphomicrobiales</taxon>
        <taxon>Rhizobiaceae</taxon>
        <taxon>Rhizobium/Agrobacterium group</taxon>
        <taxon>Agrobacterium</taxon>
        <taxon>Agrobacterium tumefaciens complex</taxon>
    </lineage>
</organism>
<proteinExistence type="inferred from homology"/>
<feature type="chain" id="PRO_0000234663" description="Tyrosine--tRNA ligase">
    <location>
        <begin position="1"/>
        <end position="417"/>
    </location>
</feature>
<feature type="domain" description="S4 RNA-binding" evidence="1">
    <location>
        <begin position="350"/>
        <end position="416"/>
    </location>
</feature>
<feature type="short sequence motif" description="'HIGH' region">
    <location>
        <begin position="44"/>
        <end position="53"/>
    </location>
</feature>
<feature type="short sequence motif" description="'KMSKS' region">
    <location>
        <begin position="236"/>
        <end position="240"/>
    </location>
</feature>
<feature type="binding site" evidence="1">
    <location>
        <position position="39"/>
    </location>
    <ligand>
        <name>L-tyrosine</name>
        <dbReference type="ChEBI" id="CHEBI:58315"/>
    </ligand>
</feature>
<feature type="binding site" evidence="1">
    <location>
        <position position="176"/>
    </location>
    <ligand>
        <name>L-tyrosine</name>
        <dbReference type="ChEBI" id="CHEBI:58315"/>
    </ligand>
</feature>
<feature type="binding site" evidence="1">
    <location>
        <position position="180"/>
    </location>
    <ligand>
        <name>L-tyrosine</name>
        <dbReference type="ChEBI" id="CHEBI:58315"/>
    </ligand>
</feature>
<feature type="binding site" evidence="1">
    <location>
        <position position="239"/>
    </location>
    <ligand>
        <name>ATP</name>
        <dbReference type="ChEBI" id="CHEBI:30616"/>
    </ligand>
</feature>
<dbReference type="EC" id="6.1.1.1" evidence="1"/>
<dbReference type="EMBL" id="AE007869">
    <property type="protein sequence ID" value="AAK87597.2"/>
    <property type="molecule type" value="Genomic_DNA"/>
</dbReference>
<dbReference type="PIR" id="AB2801">
    <property type="entry name" value="AB2801"/>
</dbReference>
<dbReference type="PIR" id="D97580">
    <property type="entry name" value="D97580"/>
</dbReference>
<dbReference type="RefSeq" id="NP_354812.2">
    <property type="nucleotide sequence ID" value="NC_003062.2"/>
</dbReference>
<dbReference type="RefSeq" id="WP_010971895.1">
    <property type="nucleotide sequence ID" value="NC_003062.2"/>
</dbReference>
<dbReference type="SMR" id="Q8UED2"/>
<dbReference type="STRING" id="176299.Atu1828"/>
<dbReference type="EnsemblBacteria" id="AAK87597">
    <property type="protein sequence ID" value="AAK87597"/>
    <property type="gene ID" value="Atu1828"/>
</dbReference>
<dbReference type="GeneID" id="1133866"/>
<dbReference type="KEGG" id="atu:Atu1828"/>
<dbReference type="PATRIC" id="fig|176299.10.peg.1842"/>
<dbReference type="eggNOG" id="COG0162">
    <property type="taxonomic scope" value="Bacteria"/>
</dbReference>
<dbReference type="HOGENOM" id="CLU_024003_0_3_5"/>
<dbReference type="OrthoDB" id="9804243at2"/>
<dbReference type="PhylomeDB" id="Q8UED2"/>
<dbReference type="BioCyc" id="AGRO:ATU1828-MONOMER"/>
<dbReference type="Proteomes" id="UP000000813">
    <property type="component" value="Chromosome circular"/>
</dbReference>
<dbReference type="GO" id="GO:0005829">
    <property type="term" value="C:cytosol"/>
    <property type="evidence" value="ECO:0007669"/>
    <property type="project" value="TreeGrafter"/>
</dbReference>
<dbReference type="GO" id="GO:0005524">
    <property type="term" value="F:ATP binding"/>
    <property type="evidence" value="ECO:0007669"/>
    <property type="project" value="UniProtKB-UniRule"/>
</dbReference>
<dbReference type="GO" id="GO:0003723">
    <property type="term" value="F:RNA binding"/>
    <property type="evidence" value="ECO:0007669"/>
    <property type="project" value="UniProtKB-KW"/>
</dbReference>
<dbReference type="GO" id="GO:0004831">
    <property type="term" value="F:tyrosine-tRNA ligase activity"/>
    <property type="evidence" value="ECO:0007669"/>
    <property type="project" value="UniProtKB-UniRule"/>
</dbReference>
<dbReference type="GO" id="GO:0006437">
    <property type="term" value="P:tyrosyl-tRNA aminoacylation"/>
    <property type="evidence" value="ECO:0007669"/>
    <property type="project" value="UniProtKB-UniRule"/>
</dbReference>
<dbReference type="CDD" id="cd00165">
    <property type="entry name" value="S4"/>
    <property type="match status" value="1"/>
</dbReference>
<dbReference type="CDD" id="cd00805">
    <property type="entry name" value="TyrRS_core"/>
    <property type="match status" value="1"/>
</dbReference>
<dbReference type="FunFam" id="1.10.240.10:FF:000001">
    <property type="entry name" value="Tyrosine--tRNA ligase"/>
    <property type="match status" value="1"/>
</dbReference>
<dbReference type="FunFam" id="3.40.50.620:FF:000008">
    <property type="entry name" value="Tyrosine--tRNA ligase"/>
    <property type="match status" value="1"/>
</dbReference>
<dbReference type="Gene3D" id="3.40.50.620">
    <property type="entry name" value="HUPs"/>
    <property type="match status" value="1"/>
</dbReference>
<dbReference type="Gene3D" id="3.10.290.10">
    <property type="entry name" value="RNA-binding S4 domain"/>
    <property type="match status" value="1"/>
</dbReference>
<dbReference type="Gene3D" id="1.10.240.10">
    <property type="entry name" value="Tyrosyl-Transfer RNA Synthetase"/>
    <property type="match status" value="1"/>
</dbReference>
<dbReference type="HAMAP" id="MF_02006">
    <property type="entry name" value="Tyr_tRNA_synth_type1"/>
    <property type="match status" value="1"/>
</dbReference>
<dbReference type="InterPro" id="IPR002305">
    <property type="entry name" value="aa-tRNA-synth_Ic"/>
</dbReference>
<dbReference type="InterPro" id="IPR014729">
    <property type="entry name" value="Rossmann-like_a/b/a_fold"/>
</dbReference>
<dbReference type="InterPro" id="IPR036986">
    <property type="entry name" value="S4_RNA-bd_sf"/>
</dbReference>
<dbReference type="InterPro" id="IPR054608">
    <property type="entry name" value="SYY-like_C"/>
</dbReference>
<dbReference type="InterPro" id="IPR002307">
    <property type="entry name" value="Tyr-tRNA-ligase"/>
</dbReference>
<dbReference type="InterPro" id="IPR024088">
    <property type="entry name" value="Tyr-tRNA-ligase_bac-type"/>
</dbReference>
<dbReference type="InterPro" id="IPR024107">
    <property type="entry name" value="Tyr-tRNA-ligase_bac_1"/>
</dbReference>
<dbReference type="NCBIfam" id="TIGR00234">
    <property type="entry name" value="tyrS"/>
    <property type="match status" value="1"/>
</dbReference>
<dbReference type="PANTHER" id="PTHR11766:SF0">
    <property type="entry name" value="TYROSINE--TRNA LIGASE, MITOCHONDRIAL"/>
    <property type="match status" value="1"/>
</dbReference>
<dbReference type="PANTHER" id="PTHR11766">
    <property type="entry name" value="TYROSYL-TRNA SYNTHETASE"/>
    <property type="match status" value="1"/>
</dbReference>
<dbReference type="Pfam" id="PF22421">
    <property type="entry name" value="SYY_C-terminal"/>
    <property type="match status" value="1"/>
</dbReference>
<dbReference type="Pfam" id="PF00579">
    <property type="entry name" value="tRNA-synt_1b"/>
    <property type="match status" value="1"/>
</dbReference>
<dbReference type="PRINTS" id="PR01040">
    <property type="entry name" value="TRNASYNTHTYR"/>
</dbReference>
<dbReference type="SUPFAM" id="SSF55174">
    <property type="entry name" value="Alpha-L RNA-binding motif"/>
    <property type="match status" value="1"/>
</dbReference>
<dbReference type="SUPFAM" id="SSF52374">
    <property type="entry name" value="Nucleotidylyl transferase"/>
    <property type="match status" value="1"/>
</dbReference>
<dbReference type="PROSITE" id="PS50889">
    <property type="entry name" value="S4"/>
    <property type="match status" value="1"/>
</dbReference>
<keyword id="KW-0030">Aminoacyl-tRNA synthetase</keyword>
<keyword id="KW-0067">ATP-binding</keyword>
<keyword id="KW-0963">Cytoplasm</keyword>
<keyword id="KW-0436">Ligase</keyword>
<keyword id="KW-0547">Nucleotide-binding</keyword>
<keyword id="KW-0648">Protein biosynthesis</keyword>
<keyword id="KW-1185">Reference proteome</keyword>
<keyword id="KW-0694">RNA-binding</keyword>
<protein>
    <recommendedName>
        <fullName evidence="1">Tyrosine--tRNA ligase</fullName>
        <ecNumber evidence="1">6.1.1.1</ecNumber>
    </recommendedName>
    <alternativeName>
        <fullName evidence="1">Tyrosyl-tRNA synthetase</fullName>
        <shortName evidence="1">TyrRS</shortName>
    </alternativeName>
</protein>
<reference key="1">
    <citation type="journal article" date="2001" name="Science">
        <title>The genome of the natural genetic engineer Agrobacterium tumefaciens C58.</title>
        <authorList>
            <person name="Wood D.W."/>
            <person name="Setubal J.C."/>
            <person name="Kaul R."/>
            <person name="Monks D.E."/>
            <person name="Kitajima J.P."/>
            <person name="Okura V.K."/>
            <person name="Zhou Y."/>
            <person name="Chen L."/>
            <person name="Wood G.E."/>
            <person name="Almeida N.F. Jr."/>
            <person name="Woo L."/>
            <person name="Chen Y."/>
            <person name="Paulsen I.T."/>
            <person name="Eisen J.A."/>
            <person name="Karp P.D."/>
            <person name="Bovee D. Sr."/>
            <person name="Chapman P."/>
            <person name="Clendenning J."/>
            <person name="Deatherage G."/>
            <person name="Gillet W."/>
            <person name="Grant C."/>
            <person name="Kutyavin T."/>
            <person name="Levy R."/>
            <person name="Li M.-J."/>
            <person name="McClelland E."/>
            <person name="Palmieri A."/>
            <person name="Raymond C."/>
            <person name="Rouse G."/>
            <person name="Saenphimmachak C."/>
            <person name="Wu Z."/>
            <person name="Romero P."/>
            <person name="Gordon D."/>
            <person name="Zhang S."/>
            <person name="Yoo H."/>
            <person name="Tao Y."/>
            <person name="Biddle P."/>
            <person name="Jung M."/>
            <person name="Krespan W."/>
            <person name="Perry M."/>
            <person name="Gordon-Kamm B."/>
            <person name="Liao L."/>
            <person name="Kim S."/>
            <person name="Hendrick C."/>
            <person name="Zhao Z.-Y."/>
            <person name="Dolan M."/>
            <person name="Chumley F."/>
            <person name="Tingey S.V."/>
            <person name="Tomb J.-F."/>
            <person name="Gordon M.P."/>
            <person name="Olson M.V."/>
            <person name="Nester E.W."/>
        </authorList>
    </citation>
    <scope>NUCLEOTIDE SEQUENCE [LARGE SCALE GENOMIC DNA]</scope>
    <source>
        <strain>C58 / ATCC 33970</strain>
    </source>
</reference>
<reference key="2">
    <citation type="journal article" date="2001" name="Science">
        <title>Genome sequence of the plant pathogen and biotechnology agent Agrobacterium tumefaciens C58.</title>
        <authorList>
            <person name="Goodner B."/>
            <person name="Hinkle G."/>
            <person name="Gattung S."/>
            <person name="Miller N."/>
            <person name="Blanchard M."/>
            <person name="Qurollo B."/>
            <person name="Goldman B.S."/>
            <person name="Cao Y."/>
            <person name="Askenazi M."/>
            <person name="Halling C."/>
            <person name="Mullin L."/>
            <person name="Houmiel K."/>
            <person name="Gordon J."/>
            <person name="Vaudin M."/>
            <person name="Iartchouk O."/>
            <person name="Epp A."/>
            <person name="Liu F."/>
            <person name="Wollam C."/>
            <person name="Allinger M."/>
            <person name="Doughty D."/>
            <person name="Scott C."/>
            <person name="Lappas C."/>
            <person name="Markelz B."/>
            <person name="Flanagan C."/>
            <person name="Crowell C."/>
            <person name="Gurson J."/>
            <person name="Lomo C."/>
            <person name="Sear C."/>
            <person name="Strub G."/>
            <person name="Cielo C."/>
            <person name="Slater S."/>
        </authorList>
    </citation>
    <scope>NUCLEOTIDE SEQUENCE [LARGE SCALE GENOMIC DNA]</scope>
    <source>
        <strain>C58 / ATCC 33970</strain>
    </source>
</reference>
<accession>Q8UED2</accession>
<accession>Q7CYF7</accession>
<name>SYY_AGRFC</name>
<sequence>MSRFKSDFLRTLDERGFIHQISDEAGLDELFAKETVTAYIGYDPTASSLHVGHLTQIMMLHWMQKTGHQPISLMGGGTGMVGDPSFKEEARKLMTIDMIEDNITSLKHVFANYLDYDRAENPALMINNADWLRGLNYLEFLRDVGRHFSVNRMLSFDSVKTRLDREQSLSFLEFNYMILQAYDFVELNQRTGCRLQMGGSDQWGNIINGIDLGHRMGTPQLYALTSPLLTTSSGAKMGKSASGAVWLNKDLLPVYDFWQYWRNTEDADVVRFAKLFTTLPMDEIARIATLGGSEINEAKKILATEVTAILHGRAAAEEAAETARKTFEEGALAENLPSIEVPTSELDAGVGVLSLIVRAGLASSNGEARRHVQGGAVKINEQGVSDERQIIGTGEVTGDGVIKLSVGKKKHVLVRPA</sequence>